<protein>
    <recommendedName>
        <fullName>Deoxyribodipyrimidine photo-lyase</fullName>
        <ecNumber>4.1.99.3</ecNumber>
    </recommendedName>
    <alternativeName>
        <fullName>DNA photolyase</fullName>
    </alternativeName>
    <alternativeName>
        <fullName>Photoreactivating enzyme</fullName>
    </alternativeName>
</protein>
<evidence type="ECO:0000250" key="1"/>
<evidence type="ECO:0000256" key="2">
    <source>
        <dbReference type="SAM" id="MobiDB-lite"/>
    </source>
</evidence>
<evidence type="ECO:0000305" key="3"/>
<name>PHR_POTTR</name>
<sequence length="532" mass="61631">MDSKKRSHSTGGEAENMESQESKAKRKPLQKHQFSKSNVVQKEEKDKTEGEEKGAEGLQEVVRQSRLRTAPSVLEFRFNKQRVRLISQDCHLQDQSQAFVYWMSRDQRVQDNWAFLYAQRLALKQKLPLHVCFCLAPCFLGATIRHYDFMLRGLEEVAEECEKLCIPFHLLLGLPKDVLPAFVQTHGIGGIVTDFSPLLHHTQWVKDVQDALPRQVPFVQVDAHNIVPCWVASDKQEYGARTIRHKIHDRLPHFLTEFPPVICHPYTSNVQAEPVDWNGCRAGLQVDRSVKEVSWAKPGTASGLTMLQSFIAERLPYFGSDRNNPNKDALSNLSPWFHFGQVSVQRAILEVQKHRSRYPDSVTNFVEEAVVRRELADNFCFYNKNYDKLEGAYDWAQTTLRLHAKDKRPHLYSLEQLESGKTHDPLWNAAQMQTVKEGKMHGFLRMYWAKKILEWTRSPEEALEFAIYLNDRFQLDGWDPNGYVGCMWSICGIHDQGWAEREIFGKIRYMNYAGCKRKFDVAEFERKISPAD</sequence>
<gene>
    <name type="primary">PHR</name>
</gene>
<accession>Q28811</accession>
<reference key="1">
    <citation type="journal article" date="1994" name="EMBO J.">
        <title>A new class of DNA photolyases present in various organisms including aplacental mammals.</title>
        <authorList>
            <person name="Yasui A."/>
            <person name="Eker A.P."/>
            <person name="Yasuhira S."/>
            <person name="Yajima H."/>
            <person name="Kobayashi T."/>
            <person name="Takao M."/>
            <person name="Oikawa A."/>
        </authorList>
    </citation>
    <scope>NUCLEOTIDE SEQUENCE [MRNA]</scope>
</reference>
<keyword id="KW-0157">Chromophore</keyword>
<keyword id="KW-0227">DNA damage</keyword>
<keyword id="KW-0234">DNA repair</keyword>
<keyword id="KW-0238">DNA-binding</keyword>
<keyword id="KW-0274">FAD</keyword>
<keyword id="KW-0285">Flavoprotein</keyword>
<keyword id="KW-0456">Lyase</keyword>
<comment type="function">
    <text>Involved in repair of UV radiation-induced DNA damage. Catalyzes the light-dependent monomerization (300-600 nm) of cyclobutyl pyrimidine dimers (in cis-syn configuration), which are formed between adjacent bases on the same DNA strand upon exposure to ultraviolet radiation.</text>
</comment>
<comment type="catalytic activity">
    <reaction>
        <text>cyclobutadipyrimidine (in DNA) = 2 pyrimidine residues (in DNA).</text>
        <dbReference type="EC" id="4.1.99.3"/>
    </reaction>
</comment>
<comment type="cofactor">
    <cofactor>
        <name>FAD</name>
        <dbReference type="ChEBI" id="CHEBI:57692"/>
    </cofactor>
</comment>
<comment type="similarity">
    <text evidence="3">Belongs to the DNA photolyase class-2 family.</text>
</comment>
<dbReference type="EC" id="4.1.99.3"/>
<dbReference type="EMBL" id="D26020">
    <property type="protein sequence ID" value="BAA05041.1"/>
    <property type="molecule type" value="mRNA"/>
</dbReference>
<dbReference type="PIR" id="S52046">
    <property type="entry name" value="S52046"/>
</dbReference>
<dbReference type="SMR" id="Q28811"/>
<dbReference type="GO" id="GO:0003904">
    <property type="term" value="F:deoxyribodipyrimidine photo-lyase activity"/>
    <property type="evidence" value="ECO:0007669"/>
    <property type="project" value="UniProtKB-EC"/>
</dbReference>
<dbReference type="GO" id="GO:0003677">
    <property type="term" value="F:DNA binding"/>
    <property type="evidence" value="ECO:0007669"/>
    <property type="project" value="UniProtKB-KW"/>
</dbReference>
<dbReference type="GO" id="GO:0000719">
    <property type="term" value="P:photoreactive repair"/>
    <property type="evidence" value="ECO:0007669"/>
    <property type="project" value="TreeGrafter"/>
</dbReference>
<dbReference type="FunFam" id="1.10.579.10:FF:000002">
    <property type="entry name" value="Deoxyribodipyrimidine photolyase"/>
    <property type="match status" value="1"/>
</dbReference>
<dbReference type="FunFam" id="1.25.40.80:FF:000004">
    <property type="entry name" value="Deoxyribodipyrimidine photolyase"/>
    <property type="match status" value="1"/>
</dbReference>
<dbReference type="FunFam" id="3.40.50.620:FF:000110">
    <property type="entry name" value="Deoxyribodipyrimidine photolyase"/>
    <property type="match status" value="1"/>
</dbReference>
<dbReference type="Gene3D" id="1.25.40.80">
    <property type="match status" value="1"/>
</dbReference>
<dbReference type="Gene3D" id="1.10.579.10">
    <property type="entry name" value="DNA Cyclobutane Dipyrimidine Photolyase, subunit A, domain 3"/>
    <property type="match status" value="1"/>
</dbReference>
<dbReference type="Gene3D" id="3.40.50.620">
    <property type="entry name" value="HUPs"/>
    <property type="match status" value="1"/>
</dbReference>
<dbReference type="InterPro" id="IPR036134">
    <property type="entry name" value="Crypto/Photolyase_FAD-like_sf"/>
</dbReference>
<dbReference type="InterPro" id="IPR036155">
    <property type="entry name" value="Crypto/Photolyase_N_sf"/>
</dbReference>
<dbReference type="InterPro" id="IPR008148">
    <property type="entry name" value="DNA_photolyase_2"/>
</dbReference>
<dbReference type="InterPro" id="IPR032673">
    <property type="entry name" value="DNA_photolyase_2_CS"/>
</dbReference>
<dbReference type="InterPro" id="IPR006050">
    <property type="entry name" value="DNA_photolyase_N"/>
</dbReference>
<dbReference type="InterPro" id="IPR052219">
    <property type="entry name" value="Photolyase_Class-2"/>
</dbReference>
<dbReference type="InterPro" id="IPR014729">
    <property type="entry name" value="Rossmann-like_a/b/a_fold"/>
</dbReference>
<dbReference type="NCBIfam" id="TIGR00591">
    <property type="entry name" value="phr2"/>
    <property type="match status" value="1"/>
</dbReference>
<dbReference type="PANTHER" id="PTHR10211:SF0">
    <property type="entry name" value="DEOXYRIBODIPYRIMIDINE PHOTO-LYASE"/>
    <property type="match status" value="1"/>
</dbReference>
<dbReference type="PANTHER" id="PTHR10211">
    <property type="entry name" value="DEOXYRIBODIPYRIMIDINE PHOTOLYASE"/>
    <property type="match status" value="1"/>
</dbReference>
<dbReference type="Pfam" id="PF00875">
    <property type="entry name" value="DNA_photolyase"/>
    <property type="match status" value="1"/>
</dbReference>
<dbReference type="SUPFAM" id="SSF48173">
    <property type="entry name" value="Cryptochrome/photolyase FAD-binding domain"/>
    <property type="match status" value="1"/>
</dbReference>
<dbReference type="SUPFAM" id="SSF52425">
    <property type="entry name" value="Cryptochrome/photolyase, N-terminal domain"/>
    <property type="match status" value="1"/>
</dbReference>
<dbReference type="PROSITE" id="PS01083">
    <property type="entry name" value="DNA_PHOTOLYASES_2_1"/>
    <property type="match status" value="1"/>
</dbReference>
<dbReference type="PROSITE" id="PS01084">
    <property type="entry name" value="DNA_PHOTOLYASES_2_2"/>
    <property type="match status" value="1"/>
</dbReference>
<dbReference type="PROSITE" id="PS51645">
    <property type="entry name" value="PHR_CRY_ALPHA_BETA"/>
    <property type="match status" value="1"/>
</dbReference>
<feature type="chain" id="PRO_0000085120" description="Deoxyribodipyrimidine photo-lyase">
    <location>
        <begin position="1"/>
        <end position="532"/>
    </location>
</feature>
<feature type="domain" description="Photolyase/cryptochrome alpha/beta">
    <location>
        <begin position="97"/>
        <end position="229"/>
    </location>
</feature>
<feature type="region of interest" description="Disordered" evidence="2">
    <location>
        <begin position="1"/>
        <end position="57"/>
    </location>
</feature>
<feature type="region of interest" description="Interaction with DNA" evidence="1">
    <location>
        <begin position="368"/>
        <end position="376"/>
    </location>
</feature>
<feature type="region of interest" description="Interaction with DNA" evidence="1">
    <location>
        <begin position="442"/>
        <end position="443"/>
    </location>
</feature>
<feature type="compositionally biased region" description="Basic residues" evidence="2">
    <location>
        <begin position="24"/>
        <end position="34"/>
    </location>
</feature>
<feature type="compositionally biased region" description="Basic and acidic residues" evidence="2">
    <location>
        <begin position="41"/>
        <end position="55"/>
    </location>
</feature>
<feature type="binding site" evidence="1">
    <location>
        <position position="322"/>
    </location>
    <ligand>
        <name>DNA</name>
        <dbReference type="ChEBI" id="CHEBI:16991"/>
    </ligand>
</feature>
<feature type="binding site" evidence="1">
    <location>
        <begin position="468"/>
        <end position="470"/>
    </location>
    <ligand>
        <name>FAD</name>
        <dbReference type="ChEBI" id="CHEBI:57692"/>
    </ligand>
</feature>
<proteinExistence type="evidence at transcript level"/>
<organism>
    <name type="scientific">Potorous tridactylus</name>
    <name type="common">Potoroo</name>
    <dbReference type="NCBI Taxonomy" id="9310"/>
    <lineage>
        <taxon>Eukaryota</taxon>
        <taxon>Metazoa</taxon>
        <taxon>Chordata</taxon>
        <taxon>Craniata</taxon>
        <taxon>Vertebrata</taxon>
        <taxon>Euteleostomi</taxon>
        <taxon>Mammalia</taxon>
        <taxon>Metatheria</taxon>
        <taxon>Diprotodontia</taxon>
        <taxon>Potoroidae</taxon>
        <taxon>Potorous</taxon>
    </lineage>
</organism>